<keyword id="KW-0025">Alternative splicing</keyword>
<keyword id="KW-0067">ATP-binding</keyword>
<keyword id="KW-0963">Cytoplasm</keyword>
<keyword id="KW-0418">Kinase</keyword>
<keyword id="KW-0496">Mitochondrion</keyword>
<keyword id="KW-0547">Nucleotide-binding</keyword>
<keyword id="KW-1185">Reference proteome</keyword>
<keyword id="KW-0808">Transferase</keyword>
<keyword id="KW-0809">Transit peptide</keyword>
<comment type="function">
    <text evidence="1 3">Phosphorylates deoxyguanosine and deoxyadenosine in the mitochondrial matrix, with the highest efficiency for deoxyguanosine (PubMed:10455141). In non-replicating cells, where cytosolic dNTP synthesis is down-regulated, mtDNA synthesis depends solely on DGUOK and TK2. Phosphorylates certain nucleoside analogs (PubMed:10455141). Widely used as target of antiviral and chemotherapeutic agents.</text>
</comment>
<comment type="catalytic activity">
    <reaction evidence="3">
        <text>2'-deoxyguanosine + ATP = dGMP + ADP + H(+)</text>
        <dbReference type="Rhea" id="RHEA:19201"/>
        <dbReference type="ChEBI" id="CHEBI:15378"/>
        <dbReference type="ChEBI" id="CHEBI:17172"/>
        <dbReference type="ChEBI" id="CHEBI:30616"/>
        <dbReference type="ChEBI" id="CHEBI:57673"/>
        <dbReference type="ChEBI" id="CHEBI:456216"/>
        <dbReference type="EC" id="2.7.1.113"/>
    </reaction>
</comment>
<comment type="catalytic activity">
    <reaction evidence="3">
        <text>2'-deoxyadenosine + ATP = dAMP + ADP + H(+)</text>
        <dbReference type="Rhea" id="RHEA:23452"/>
        <dbReference type="ChEBI" id="CHEBI:15378"/>
        <dbReference type="ChEBI" id="CHEBI:17256"/>
        <dbReference type="ChEBI" id="CHEBI:30616"/>
        <dbReference type="ChEBI" id="CHEBI:58245"/>
        <dbReference type="ChEBI" id="CHEBI:456216"/>
        <dbReference type="EC" id="2.7.1.76"/>
    </reaction>
</comment>
<comment type="subunit">
    <text evidence="1">Homodimer.</text>
</comment>
<comment type="subcellular location">
    <molecule>Isoform 1</molecule>
    <subcellularLocation>
        <location evidence="3">Mitochondrion</location>
    </subcellularLocation>
</comment>
<comment type="subcellular location">
    <molecule>Isoform 2</molecule>
    <subcellularLocation>
        <location evidence="3">Cytoplasm</location>
    </subcellularLocation>
</comment>
<comment type="alternative products">
    <event type="alternative splicing"/>
    <isoform>
        <id>Q9QX60-1</id>
        <name>1</name>
        <sequence type="displayed"/>
    </isoform>
    <isoform>
        <id>Q9QX60-2</id>
        <name>2</name>
        <sequence type="described" ref="VSP_003027"/>
    </isoform>
</comment>
<comment type="tissue specificity">
    <text evidence="3">Spleen and thymus. Expressed at much lower levels in the brain and liver.</text>
</comment>
<comment type="similarity">
    <text evidence="4">Belongs to the DCK/DGK family.</text>
</comment>
<protein>
    <recommendedName>
        <fullName>Deoxyguanosine kinase, mitochondrial</fullName>
        <ecNumber evidence="3">2.7.1.113</ecNumber>
    </recommendedName>
    <alternativeName>
        <fullName>Deoxyadenosine kinase, mitochondrial</fullName>
        <ecNumber evidence="3">2.7.1.76</ecNumber>
    </alternativeName>
</protein>
<evidence type="ECO:0000250" key="1">
    <source>
        <dbReference type="UniProtKB" id="Q16854"/>
    </source>
</evidence>
<evidence type="ECO:0000255" key="2"/>
<evidence type="ECO:0000269" key="3">
    <source>
    </source>
</evidence>
<evidence type="ECO:0000305" key="4"/>
<evidence type="ECO:0000305" key="5">
    <source>
    </source>
</evidence>
<reference key="1">
    <citation type="journal article" date="1999" name="J. Biol. Chem.">
        <title>Cloning and characterization of mouse deoxyguanosine kinase. Evidence for a cytoplasmic isoform.</title>
        <authorList>
            <person name="Petrakis T.G."/>
            <person name="Ktistaki E."/>
            <person name="Wang L."/>
            <person name="Eriksson S."/>
            <person name="Talianidis I."/>
        </authorList>
    </citation>
    <scope>NUCLEOTIDE SEQUENCE [MRNA] (ISOFORMS 1 AND 2)</scope>
    <scope>FUNCTION</scope>
    <scope>CATALYTIC ACTIVITY</scope>
    <scope>SUBCELLULAR LOCATION</scope>
    <scope>TISSUE SPECIFICITY</scope>
    <source>
        <strain>BALB/cJ</strain>
        <tissue>Spleen</tissue>
    </source>
</reference>
<reference key="2">
    <citation type="submission" date="1997-02" db="EMBL/GenBank/DDBJ databases">
        <title>Cloning of mouse deoxyguanosine kinase cDNA.</title>
        <authorList>
            <person name="Johansson M."/>
            <person name="Holmdahl L."/>
            <person name="Karlsson A."/>
        </authorList>
    </citation>
    <scope>NUCLEOTIDE SEQUENCE [MRNA]</scope>
</reference>
<reference key="3">
    <citation type="journal article" date="2005" name="Science">
        <title>The transcriptional landscape of the mammalian genome.</title>
        <authorList>
            <person name="Carninci P."/>
            <person name="Kasukawa T."/>
            <person name="Katayama S."/>
            <person name="Gough J."/>
            <person name="Frith M.C."/>
            <person name="Maeda N."/>
            <person name="Oyama R."/>
            <person name="Ravasi T."/>
            <person name="Lenhard B."/>
            <person name="Wells C."/>
            <person name="Kodzius R."/>
            <person name="Shimokawa K."/>
            <person name="Bajic V.B."/>
            <person name="Brenner S.E."/>
            <person name="Batalov S."/>
            <person name="Forrest A.R."/>
            <person name="Zavolan M."/>
            <person name="Davis M.J."/>
            <person name="Wilming L.G."/>
            <person name="Aidinis V."/>
            <person name="Allen J.E."/>
            <person name="Ambesi-Impiombato A."/>
            <person name="Apweiler R."/>
            <person name="Aturaliya R.N."/>
            <person name="Bailey T.L."/>
            <person name="Bansal M."/>
            <person name="Baxter L."/>
            <person name="Beisel K.W."/>
            <person name="Bersano T."/>
            <person name="Bono H."/>
            <person name="Chalk A.M."/>
            <person name="Chiu K.P."/>
            <person name="Choudhary V."/>
            <person name="Christoffels A."/>
            <person name="Clutterbuck D.R."/>
            <person name="Crowe M.L."/>
            <person name="Dalla E."/>
            <person name="Dalrymple B.P."/>
            <person name="de Bono B."/>
            <person name="Della Gatta G."/>
            <person name="di Bernardo D."/>
            <person name="Down T."/>
            <person name="Engstrom P."/>
            <person name="Fagiolini M."/>
            <person name="Faulkner G."/>
            <person name="Fletcher C.F."/>
            <person name="Fukushima T."/>
            <person name="Furuno M."/>
            <person name="Futaki S."/>
            <person name="Gariboldi M."/>
            <person name="Georgii-Hemming P."/>
            <person name="Gingeras T.R."/>
            <person name="Gojobori T."/>
            <person name="Green R.E."/>
            <person name="Gustincich S."/>
            <person name="Harbers M."/>
            <person name="Hayashi Y."/>
            <person name="Hensch T.K."/>
            <person name="Hirokawa N."/>
            <person name="Hill D."/>
            <person name="Huminiecki L."/>
            <person name="Iacono M."/>
            <person name="Ikeo K."/>
            <person name="Iwama A."/>
            <person name="Ishikawa T."/>
            <person name="Jakt M."/>
            <person name="Kanapin A."/>
            <person name="Katoh M."/>
            <person name="Kawasawa Y."/>
            <person name="Kelso J."/>
            <person name="Kitamura H."/>
            <person name="Kitano H."/>
            <person name="Kollias G."/>
            <person name="Krishnan S.P."/>
            <person name="Kruger A."/>
            <person name="Kummerfeld S.K."/>
            <person name="Kurochkin I.V."/>
            <person name="Lareau L.F."/>
            <person name="Lazarevic D."/>
            <person name="Lipovich L."/>
            <person name="Liu J."/>
            <person name="Liuni S."/>
            <person name="McWilliam S."/>
            <person name="Madan Babu M."/>
            <person name="Madera M."/>
            <person name="Marchionni L."/>
            <person name="Matsuda H."/>
            <person name="Matsuzawa S."/>
            <person name="Miki H."/>
            <person name="Mignone F."/>
            <person name="Miyake S."/>
            <person name="Morris K."/>
            <person name="Mottagui-Tabar S."/>
            <person name="Mulder N."/>
            <person name="Nakano N."/>
            <person name="Nakauchi H."/>
            <person name="Ng P."/>
            <person name="Nilsson R."/>
            <person name="Nishiguchi S."/>
            <person name="Nishikawa S."/>
            <person name="Nori F."/>
            <person name="Ohara O."/>
            <person name="Okazaki Y."/>
            <person name="Orlando V."/>
            <person name="Pang K.C."/>
            <person name="Pavan W.J."/>
            <person name="Pavesi G."/>
            <person name="Pesole G."/>
            <person name="Petrovsky N."/>
            <person name="Piazza S."/>
            <person name="Reed J."/>
            <person name="Reid J.F."/>
            <person name="Ring B.Z."/>
            <person name="Ringwald M."/>
            <person name="Rost B."/>
            <person name="Ruan Y."/>
            <person name="Salzberg S.L."/>
            <person name="Sandelin A."/>
            <person name="Schneider C."/>
            <person name="Schoenbach C."/>
            <person name="Sekiguchi K."/>
            <person name="Semple C.A."/>
            <person name="Seno S."/>
            <person name="Sessa L."/>
            <person name="Sheng Y."/>
            <person name="Shibata Y."/>
            <person name="Shimada H."/>
            <person name="Shimada K."/>
            <person name="Silva D."/>
            <person name="Sinclair B."/>
            <person name="Sperling S."/>
            <person name="Stupka E."/>
            <person name="Sugiura K."/>
            <person name="Sultana R."/>
            <person name="Takenaka Y."/>
            <person name="Taki K."/>
            <person name="Tammoja K."/>
            <person name="Tan S.L."/>
            <person name="Tang S."/>
            <person name="Taylor M.S."/>
            <person name="Tegner J."/>
            <person name="Teichmann S.A."/>
            <person name="Ueda H.R."/>
            <person name="van Nimwegen E."/>
            <person name="Verardo R."/>
            <person name="Wei C.L."/>
            <person name="Yagi K."/>
            <person name="Yamanishi H."/>
            <person name="Zabarovsky E."/>
            <person name="Zhu S."/>
            <person name="Zimmer A."/>
            <person name="Hide W."/>
            <person name="Bult C."/>
            <person name="Grimmond S.M."/>
            <person name="Teasdale R.D."/>
            <person name="Liu E.T."/>
            <person name="Brusic V."/>
            <person name="Quackenbush J."/>
            <person name="Wahlestedt C."/>
            <person name="Mattick J.S."/>
            <person name="Hume D.A."/>
            <person name="Kai C."/>
            <person name="Sasaki D."/>
            <person name="Tomaru Y."/>
            <person name="Fukuda S."/>
            <person name="Kanamori-Katayama M."/>
            <person name="Suzuki M."/>
            <person name="Aoki J."/>
            <person name="Arakawa T."/>
            <person name="Iida J."/>
            <person name="Imamura K."/>
            <person name="Itoh M."/>
            <person name="Kato T."/>
            <person name="Kawaji H."/>
            <person name="Kawagashira N."/>
            <person name="Kawashima T."/>
            <person name="Kojima M."/>
            <person name="Kondo S."/>
            <person name="Konno H."/>
            <person name="Nakano K."/>
            <person name="Ninomiya N."/>
            <person name="Nishio T."/>
            <person name="Okada M."/>
            <person name="Plessy C."/>
            <person name="Shibata K."/>
            <person name="Shiraki T."/>
            <person name="Suzuki S."/>
            <person name="Tagami M."/>
            <person name="Waki K."/>
            <person name="Watahiki A."/>
            <person name="Okamura-Oho Y."/>
            <person name="Suzuki H."/>
            <person name="Kawai J."/>
            <person name="Hayashizaki Y."/>
        </authorList>
    </citation>
    <scope>NUCLEOTIDE SEQUENCE [LARGE SCALE MRNA]</scope>
    <source>
        <strain>C57BL/6J</strain>
        <tissue>Urinary bladder</tissue>
    </source>
</reference>
<reference key="4">
    <citation type="journal article" date="2009" name="PLoS Biol.">
        <title>Lineage-specific biology revealed by a finished genome assembly of the mouse.</title>
        <authorList>
            <person name="Church D.M."/>
            <person name="Goodstadt L."/>
            <person name="Hillier L.W."/>
            <person name="Zody M.C."/>
            <person name="Goldstein S."/>
            <person name="She X."/>
            <person name="Bult C.J."/>
            <person name="Agarwala R."/>
            <person name="Cherry J.L."/>
            <person name="DiCuccio M."/>
            <person name="Hlavina W."/>
            <person name="Kapustin Y."/>
            <person name="Meric P."/>
            <person name="Maglott D."/>
            <person name="Birtle Z."/>
            <person name="Marques A.C."/>
            <person name="Graves T."/>
            <person name="Zhou S."/>
            <person name="Teague B."/>
            <person name="Potamousis K."/>
            <person name="Churas C."/>
            <person name="Place M."/>
            <person name="Herschleb J."/>
            <person name="Runnheim R."/>
            <person name="Forrest D."/>
            <person name="Amos-Landgraf J."/>
            <person name="Schwartz D.C."/>
            <person name="Cheng Z."/>
            <person name="Lindblad-Toh K."/>
            <person name="Eichler E.E."/>
            <person name="Ponting C.P."/>
        </authorList>
    </citation>
    <scope>NUCLEOTIDE SEQUENCE [LARGE SCALE GENOMIC DNA]</scope>
    <source>
        <strain>C57BL/6J</strain>
    </source>
</reference>
<reference key="5">
    <citation type="submission" date="2005-07" db="EMBL/GenBank/DDBJ databases">
        <authorList>
            <person name="Mural R.J."/>
            <person name="Adams M.D."/>
            <person name="Myers E.W."/>
            <person name="Smith H.O."/>
            <person name="Venter J.C."/>
        </authorList>
    </citation>
    <scope>NUCLEOTIDE SEQUENCE [LARGE SCALE GENOMIC DNA]</scope>
</reference>
<reference key="6">
    <citation type="journal article" date="2010" name="Cell">
        <title>A tissue-specific atlas of mouse protein phosphorylation and expression.</title>
        <authorList>
            <person name="Huttlin E.L."/>
            <person name="Jedrychowski M.P."/>
            <person name="Elias J.E."/>
            <person name="Goswami T."/>
            <person name="Rad R."/>
            <person name="Beausoleil S.A."/>
            <person name="Villen J."/>
            <person name="Haas W."/>
            <person name="Sowa M.E."/>
            <person name="Gygi S.P."/>
        </authorList>
    </citation>
    <scope>IDENTIFICATION BY MASS SPECTROMETRY [LARGE SCALE ANALYSIS]</scope>
    <source>
        <tissue>Brain</tissue>
        <tissue>Brown adipose tissue</tissue>
        <tissue>Heart</tissue>
        <tissue>Kidney</tissue>
        <tissue>Liver</tissue>
        <tissue>Lung</tissue>
        <tissue>Spleen</tissue>
        <tissue>Testis</tissue>
    </source>
</reference>
<proteinExistence type="evidence at protein level"/>
<organism>
    <name type="scientific">Mus musculus</name>
    <name type="common">Mouse</name>
    <dbReference type="NCBI Taxonomy" id="10090"/>
    <lineage>
        <taxon>Eukaryota</taxon>
        <taxon>Metazoa</taxon>
        <taxon>Chordata</taxon>
        <taxon>Craniata</taxon>
        <taxon>Vertebrata</taxon>
        <taxon>Euteleostomi</taxon>
        <taxon>Mammalia</taxon>
        <taxon>Eutheria</taxon>
        <taxon>Euarchontoglires</taxon>
        <taxon>Glires</taxon>
        <taxon>Rodentia</taxon>
        <taxon>Myomorpha</taxon>
        <taxon>Muroidea</taxon>
        <taxon>Muridae</taxon>
        <taxon>Murinae</taxon>
        <taxon>Mus</taxon>
        <taxon>Mus</taxon>
    </lineage>
</organism>
<name>DGUOK_MOUSE</name>
<accession>Q9QX60</accession>
<accession>Q8CBU2</accession>
<accession>Q9R0Y2</accession>
<accession>Q9WUT9</accession>
<gene>
    <name type="primary">Dguok</name>
    <name type="synonym">Dgk</name>
</gene>
<feature type="transit peptide" description="Mitochondrion" evidence="2">
    <location>
        <begin position="1"/>
        <end position="39"/>
    </location>
</feature>
<feature type="chain" id="PRO_0000016841" description="Deoxyguanosine kinase, mitochondrial">
    <location>
        <begin position="40"/>
        <end position="277"/>
    </location>
</feature>
<feature type="active site" description="Proton acceptor" evidence="2">
    <location>
        <position position="141"/>
    </location>
</feature>
<feature type="binding site" evidence="1">
    <location>
        <begin position="45"/>
        <end position="53"/>
    </location>
    <ligand>
        <name>ATP</name>
        <dbReference type="ChEBI" id="CHEBI:30616"/>
    </ligand>
</feature>
<feature type="binding site" evidence="1">
    <location>
        <position position="70"/>
    </location>
    <ligand>
        <name>substrate</name>
    </ligand>
</feature>
<feature type="binding site" evidence="1">
    <location>
        <position position="100"/>
    </location>
    <ligand>
        <name>substrate</name>
    </ligand>
</feature>
<feature type="binding site" evidence="1">
    <location>
        <position position="111"/>
    </location>
    <ligand>
        <name>substrate</name>
    </ligand>
</feature>
<feature type="binding site" evidence="1">
    <location>
        <position position="118"/>
    </location>
    <ligand>
        <name>substrate</name>
    </ligand>
</feature>
<feature type="binding site" evidence="1">
    <location>
        <position position="142"/>
    </location>
    <ligand>
        <name>substrate</name>
    </ligand>
</feature>
<feature type="binding site" evidence="2">
    <location>
        <position position="147"/>
    </location>
    <ligand>
        <name>substrate</name>
    </ligand>
</feature>
<feature type="binding site" evidence="1">
    <location>
        <begin position="206"/>
        <end position="208"/>
    </location>
    <ligand>
        <name>ATP</name>
        <dbReference type="ChEBI" id="CHEBI:30616"/>
    </ligand>
</feature>
<feature type="binding site" evidence="1">
    <location>
        <position position="211"/>
    </location>
    <ligand>
        <name>substrate</name>
    </ligand>
</feature>
<feature type="binding site" evidence="2">
    <location>
        <begin position="254"/>
        <end position="256"/>
    </location>
    <ligand>
        <name>ATP</name>
        <dbReference type="ChEBI" id="CHEBI:30616"/>
    </ligand>
</feature>
<feature type="splice variant" id="VSP_003027" description="In isoform 2." evidence="5">
    <location>
        <begin position="1"/>
        <end position="31"/>
    </location>
</feature>
<feature type="sequence conflict" description="In Ref. 2; AAF14342." evidence="4" ref="2">
    <original>AL</original>
    <variation>CF</variation>
    <location>
        <begin position="22"/>
        <end position="23"/>
    </location>
</feature>
<feature type="sequence conflict" description="In Ref. 1; CAB43121/CAB43122." evidence="4" ref="1">
    <original>E</original>
    <variation>A</variation>
    <location>
        <position position="74"/>
    </location>
</feature>
<dbReference type="EC" id="2.7.1.113" evidence="3"/>
<dbReference type="EC" id="2.7.1.76" evidence="3"/>
<dbReference type="EMBL" id="AJ133749">
    <property type="protein sequence ID" value="CAB43121.1"/>
    <property type="molecule type" value="mRNA"/>
</dbReference>
<dbReference type="EMBL" id="AJ133750">
    <property type="protein sequence ID" value="CAB43122.1"/>
    <property type="molecule type" value="mRNA"/>
</dbReference>
<dbReference type="EMBL" id="U90524">
    <property type="protein sequence ID" value="AAF14342.1"/>
    <property type="molecule type" value="mRNA"/>
</dbReference>
<dbReference type="EMBL" id="AK035281">
    <property type="protein sequence ID" value="BAC29014.1"/>
    <property type="molecule type" value="mRNA"/>
</dbReference>
<dbReference type="EMBL" id="AC090648">
    <property type="status" value="NOT_ANNOTATED_CDS"/>
    <property type="molecule type" value="Genomic_DNA"/>
</dbReference>
<dbReference type="EMBL" id="CH466523">
    <property type="protein sequence ID" value="EDK99082.1"/>
    <property type="molecule type" value="Genomic_DNA"/>
</dbReference>
<dbReference type="CCDS" id="CCDS20279.1">
    <molecule id="Q9QX60-1"/>
</dbReference>
<dbReference type="RefSeq" id="NP_038792.2">
    <molecule id="Q9QX60-1"/>
    <property type="nucleotide sequence ID" value="NM_013764.3"/>
</dbReference>
<dbReference type="SMR" id="Q9QX60"/>
<dbReference type="FunCoup" id="Q9QX60">
    <property type="interactions" value="2033"/>
</dbReference>
<dbReference type="STRING" id="10090.ENSMUSP00000014698"/>
<dbReference type="iPTMnet" id="Q9QX60"/>
<dbReference type="PhosphoSitePlus" id="Q9QX60"/>
<dbReference type="SwissPalm" id="Q9QX60"/>
<dbReference type="jPOST" id="Q9QX60"/>
<dbReference type="PaxDb" id="10090-ENSMUSP00000014698"/>
<dbReference type="PeptideAtlas" id="Q9QX60"/>
<dbReference type="ProteomicsDB" id="279525">
    <molecule id="Q9QX60-1"/>
</dbReference>
<dbReference type="ProteomicsDB" id="279526">
    <molecule id="Q9QX60-2"/>
</dbReference>
<dbReference type="Pumba" id="Q9QX60"/>
<dbReference type="Antibodypedia" id="31404">
    <property type="antibodies" value="208 antibodies from 25 providers"/>
</dbReference>
<dbReference type="DNASU" id="27369"/>
<dbReference type="Ensembl" id="ENSMUST00000014698.10">
    <molecule id="Q9QX60-1"/>
    <property type="protein sequence ID" value="ENSMUSP00000014698.4"/>
    <property type="gene ID" value="ENSMUSG00000014554.14"/>
</dbReference>
<dbReference type="GeneID" id="27369"/>
<dbReference type="KEGG" id="mmu:27369"/>
<dbReference type="UCSC" id="uc009cnn.2">
    <molecule id="Q9QX60-1"/>
    <property type="organism name" value="mouse"/>
</dbReference>
<dbReference type="AGR" id="MGI:1351602"/>
<dbReference type="CTD" id="1716"/>
<dbReference type="MGI" id="MGI:1351602">
    <property type="gene designation" value="Dguok"/>
</dbReference>
<dbReference type="VEuPathDB" id="HostDB:ENSMUSG00000014554"/>
<dbReference type="eggNOG" id="KOG4235">
    <property type="taxonomic scope" value="Eukaryota"/>
</dbReference>
<dbReference type="GeneTree" id="ENSGT00940000159627"/>
<dbReference type="InParanoid" id="Q9QX60"/>
<dbReference type="OMA" id="QHEHWLV"/>
<dbReference type="OrthoDB" id="567086at2759"/>
<dbReference type="PhylomeDB" id="Q9QX60"/>
<dbReference type="TreeFam" id="TF324413"/>
<dbReference type="BRENDA" id="2.7.1.113">
    <property type="organism ID" value="3474"/>
</dbReference>
<dbReference type="Reactome" id="R-MMU-74217">
    <property type="pathway name" value="Purine salvage"/>
</dbReference>
<dbReference type="SABIO-RK" id="Q9QX60"/>
<dbReference type="BioGRID-ORCS" id="27369">
    <property type="hits" value="5 hits in 79 CRISPR screens"/>
</dbReference>
<dbReference type="PRO" id="PR:Q9QX60"/>
<dbReference type="Proteomes" id="UP000000589">
    <property type="component" value="Chromosome 6"/>
</dbReference>
<dbReference type="RNAct" id="Q9QX60">
    <property type="molecule type" value="protein"/>
</dbReference>
<dbReference type="Bgee" id="ENSMUSG00000014554">
    <property type="expression patterns" value="Expressed in retinal neural layer and 256 other cell types or tissues"/>
</dbReference>
<dbReference type="ExpressionAtlas" id="Q9QX60">
    <property type="expression patterns" value="baseline and differential"/>
</dbReference>
<dbReference type="GO" id="GO:0005737">
    <property type="term" value="C:cytoplasm"/>
    <property type="evidence" value="ECO:0000314"/>
    <property type="project" value="MGI"/>
</dbReference>
<dbReference type="GO" id="GO:0005829">
    <property type="term" value="C:cytosol"/>
    <property type="evidence" value="ECO:0000314"/>
    <property type="project" value="MGI"/>
</dbReference>
<dbReference type="GO" id="GO:0005739">
    <property type="term" value="C:mitochondrion"/>
    <property type="evidence" value="ECO:0000314"/>
    <property type="project" value="MGI"/>
</dbReference>
<dbReference type="GO" id="GO:0005524">
    <property type="term" value="F:ATP binding"/>
    <property type="evidence" value="ECO:0007669"/>
    <property type="project" value="UniProtKB-KW"/>
</dbReference>
<dbReference type="GO" id="GO:0004136">
    <property type="term" value="F:deoxyadenosine kinase activity"/>
    <property type="evidence" value="ECO:0000314"/>
    <property type="project" value="MGI"/>
</dbReference>
<dbReference type="GO" id="GO:0004138">
    <property type="term" value="F:deoxyguanosine kinase activity"/>
    <property type="evidence" value="ECO:0000314"/>
    <property type="project" value="MGI"/>
</dbReference>
<dbReference type="GO" id="GO:0019136">
    <property type="term" value="F:deoxynucleoside kinase activity"/>
    <property type="evidence" value="ECO:0000314"/>
    <property type="project" value="MGI"/>
</dbReference>
<dbReference type="GO" id="GO:0106383">
    <property type="term" value="P:dAMP salvage"/>
    <property type="evidence" value="ECO:0000266"/>
    <property type="project" value="MGI"/>
</dbReference>
<dbReference type="GO" id="GO:0106384">
    <property type="term" value="P:dGMP salvage"/>
    <property type="evidence" value="ECO:0000304"/>
    <property type="project" value="MGI"/>
</dbReference>
<dbReference type="GO" id="GO:0046070">
    <property type="term" value="P:dGTP metabolic process"/>
    <property type="evidence" value="ECO:0000314"/>
    <property type="project" value="MGI"/>
</dbReference>
<dbReference type="GO" id="GO:0106385">
    <property type="term" value="P:dIMP salvage"/>
    <property type="evidence" value="ECO:0000304"/>
    <property type="project" value="MGI"/>
</dbReference>
<dbReference type="GO" id="GO:0006139">
    <property type="term" value="P:nucleobase-containing compound metabolic process"/>
    <property type="evidence" value="ECO:0000304"/>
    <property type="project" value="MGI"/>
</dbReference>
<dbReference type="GO" id="GO:0046122">
    <property type="term" value="P:purine deoxyribonucleoside metabolic process"/>
    <property type="evidence" value="ECO:0007669"/>
    <property type="project" value="Ensembl"/>
</dbReference>
<dbReference type="CDD" id="cd01673">
    <property type="entry name" value="dNK"/>
    <property type="match status" value="1"/>
</dbReference>
<dbReference type="FunFam" id="3.40.50.300:FF:000461">
    <property type="entry name" value="Deoxycytidine kinase"/>
    <property type="match status" value="1"/>
</dbReference>
<dbReference type="Gene3D" id="3.40.50.300">
    <property type="entry name" value="P-loop containing nucleotide triphosphate hydrolases"/>
    <property type="match status" value="1"/>
</dbReference>
<dbReference type="InterPro" id="IPR002624">
    <property type="entry name" value="DCK/DGK"/>
</dbReference>
<dbReference type="InterPro" id="IPR050566">
    <property type="entry name" value="Deoxyribonucleoside_kinase"/>
</dbReference>
<dbReference type="InterPro" id="IPR031314">
    <property type="entry name" value="DNK_dom"/>
</dbReference>
<dbReference type="InterPro" id="IPR027417">
    <property type="entry name" value="P-loop_NTPase"/>
</dbReference>
<dbReference type="PANTHER" id="PTHR10513:SF8">
    <property type="entry name" value="DEOXYGUANOSINE KINASE, MITOCHONDRIAL"/>
    <property type="match status" value="1"/>
</dbReference>
<dbReference type="PANTHER" id="PTHR10513">
    <property type="entry name" value="DEOXYNUCLEOSIDE KINASE"/>
    <property type="match status" value="1"/>
</dbReference>
<dbReference type="Pfam" id="PF01712">
    <property type="entry name" value="dNK"/>
    <property type="match status" value="1"/>
</dbReference>
<dbReference type="PIRSF" id="PIRSF000705">
    <property type="entry name" value="DNK"/>
    <property type="match status" value="1"/>
</dbReference>
<dbReference type="SUPFAM" id="SSF52540">
    <property type="entry name" value="P-loop containing nucleoside triphosphate hydrolases"/>
    <property type="match status" value="1"/>
</dbReference>
<sequence>MAAGRFLLRRLRASFRSPLRNALVDAPHARAMHDGGGPRRLCIEGNIAVGKSTFVKLLMKTHPEWQVATEPIAEWQNIQAAGAQKDGTSKRLGNLLEMMYQEPARWSYTFQTLSFMSRLKVQLEPIPGRLLQAEKSVRVFERSVYSDRYIFAKNLFENGSLSDIEWHIYQDWHSFLLQEFANRLLLHGFIYLQASPQVCMERLYQRDREEEKGIELAYLQQLHSQHEDWFINKTTKLHFEALQHVPVLVLDVTEDFSENAARQEELMGQVNTFMRNL</sequence>